<organism>
    <name type="scientific">Brucella suis biovar 1 (strain 1330)</name>
    <dbReference type="NCBI Taxonomy" id="204722"/>
    <lineage>
        <taxon>Bacteria</taxon>
        <taxon>Pseudomonadati</taxon>
        <taxon>Pseudomonadota</taxon>
        <taxon>Alphaproteobacteria</taxon>
        <taxon>Hyphomicrobiales</taxon>
        <taxon>Brucellaceae</taxon>
        <taxon>Brucella/Ochrobactrum group</taxon>
        <taxon>Brucella</taxon>
    </lineage>
</organism>
<proteinExistence type="inferred from homology"/>
<protein>
    <recommendedName>
        <fullName evidence="1">Large ribosomal subunit protein uL13</fullName>
    </recommendedName>
    <alternativeName>
        <fullName evidence="2">50S ribosomal protein L13</fullName>
    </alternativeName>
</protein>
<comment type="function">
    <text evidence="1">This protein is one of the early assembly proteins of the 50S ribosomal subunit, although it is not seen to bind rRNA by itself. It is important during the early stages of 50S assembly.</text>
</comment>
<comment type="subunit">
    <text evidence="1">Part of the 50S ribosomal subunit.</text>
</comment>
<comment type="similarity">
    <text evidence="1">Belongs to the universal ribosomal protein uL13 family.</text>
</comment>
<keyword id="KW-0687">Ribonucleoprotein</keyword>
<keyword id="KW-0689">Ribosomal protein</keyword>
<dbReference type="EMBL" id="AE014291">
    <property type="protein sequence ID" value="AAN29720.1"/>
    <property type="molecule type" value="Genomic_DNA"/>
</dbReference>
<dbReference type="EMBL" id="CP002997">
    <property type="protein sequence ID" value="AEM18137.1"/>
    <property type="molecule type" value="Genomic_DNA"/>
</dbReference>
<dbReference type="RefSeq" id="WP_004688231.1">
    <property type="nucleotide sequence ID" value="NZ_KN046804.1"/>
</dbReference>
<dbReference type="SMR" id="Q8G1C8"/>
<dbReference type="GeneID" id="97533900"/>
<dbReference type="KEGG" id="bms:BR0791"/>
<dbReference type="KEGG" id="bsi:BS1330_I0787"/>
<dbReference type="PATRIC" id="fig|204722.22.peg.1058"/>
<dbReference type="HOGENOM" id="CLU_082184_2_0_5"/>
<dbReference type="PhylomeDB" id="Q8G1C8"/>
<dbReference type="Proteomes" id="UP000007104">
    <property type="component" value="Chromosome I"/>
</dbReference>
<dbReference type="GO" id="GO:0022625">
    <property type="term" value="C:cytosolic large ribosomal subunit"/>
    <property type="evidence" value="ECO:0007669"/>
    <property type="project" value="TreeGrafter"/>
</dbReference>
<dbReference type="GO" id="GO:0003729">
    <property type="term" value="F:mRNA binding"/>
    <property type="evidence" value="ECO:0007669"/>
    <property type="project" value="TreeGrafter"/>
</dbReference>
<dbReference type="GO" id="GO:0003735">
    <property type="term" value="F:structural constituent of ribosome"/>
    <property type="evidence" value="ECO:0007669"/>
    <property type="project" value="InterPro"/>
</dbReference>
<dbReference type="GO" id="GO:0017148">
    <property type="term" value="P:negative regulation of translation"/>
    <property type="evidence" value="ECO:0007669"/>
    <property type="project" value="TreeGrafter"/>
</dbReference>
<dbReference type="GO" id="GO:0006412">
    <property type="term" value="P:translation"/>
    <property type="evidence" value="ECO:0007669"/>
    <property type="project" value="UniProtKB-UniRule"/>
</dbReference>
<dbReference type="CDD" id="cd00392">
    <property type="entry name" value="Ribosomal_L13"/>
    <property type="match status" value="1"/>
</dbReference>
<dbReference type="FunFam" id="3.90.1180.10:FF:000001">
    <property type="entry name" value="50S ribosomal protein L13"/>
    <property type="match status" value="1"/>
</dbReference>
<dbReference type="Gene3D" id="3.90.1180.10">
    <property type="entry name" value="Ribosomal protein L13"/>
    <property type="match status" value="1"/>
</dbReference>
<dbReference type="HAMAP" id="MF_01366">
    <property type="entry name" value="Ribosomal_uL13"/>
    <property type="match status" value="1"/>
</dbReference>
<dbReference type="InterPro" id="IPR005822">
    <property type="entry name" value="Ribosomal_uL13"/>
</dbReference>
<dbReference type="InterPro" id="IPR005823">
    <property type="entry name" value="Ribosomal_uL13_bac-type"/>
</dbReference>
<dbReference type="InterPro" id="IPR036899">
    <property type="entry name" value="Ribosomal_uL13_sf"/>
</dbReference>
<dbReference type="NCBIfam" id="TIGR01066">
    <property type="entry name" value="rplM_bact"/>
    <property type="match status" value="1"/>
</dbReference>
<dbReference type="PANTHER" id="PTHR11545:SF2">
    <property type="entry name" value="LARGE RIBOSOMAL SUBUNIT PROTEIN UL13M"/>
    <property type="match status" value="1"/>
</dbReference>
<dbReference type="PANTHER" id="PTHR11545">
    <property type="entry name" value="RIBOSOMAL PROTEIN L13"/>
    <property type="match status" value="1"/>
</dbReference>
<dbReference type="Pfam" id="PF00572">
    <property type="entry name" value="Ribosomal_L13"/>
    <property type="match status" value="1"/>
</dbReference>
<dbReference type="PIRSF" id="PIRSF002181">
    <property type="entry name" value="Ribosomal_L13"/>
    <property type="match status" value="1"/>
</dbReference>
<dbReference type="SUPFAM" id="SSF52161">
    <property type="entry name" value="Ribosomal protein L13"/>
    <property type="match status" value="1"/>
</dbReference>
<accession>Q8G1C8</accession>
<accession>G0K8T9</accession>
<reference key="1">
    <citation type="journal article" date="2002" name="Proc. Natl. Acad. Sci. U.S.A.">
        <title>The Brucella suis genome reveals fundamental similarities between animal and plant pathogens and symbionts.</title>
        <authorList>
            <person name="Paulsen I.T."/>
            <person name="Seshadri R."/>
            <person name="Nelson K.E."/>
            <person name="Eisen J.A."/>
            <person name="Heidelberg J.F."/>
            <person name="Read T.D."/>
            <person name="Dodson R.J."/>
            <person name="Umayam L.A."/>
            <person name="Brinkac L.M."/>
            <person name="Beanan M.J."/>
            <person name="Daugherty S.C."/>
            <person name="DeBoy R.T."/>
            <person name="Durkin A.S."/>
            <person name="Kolonay J.F."/>
            <person name="Madupu R."/>
            <person name="Nelson W.C."/>
            <person name="Ayodeji B."/>
            <person name="Kraul M."/>
            <person name="Shetty J."/>
            <person name="Malek J.A."/>
            <person name="Van Aken S.E."/>
            <person name="Riedmuller S."/>
            <person name="Tettelin H."/>
            <person name="Gill S.R."/>
            <person name="White O."/>
            <person name="Salzberg S.L."/>
            <person name="Hoover D.L."/>
            <person name="Lindler L.E."/>
            <person name="Halling S.M."/>
            <person name="Boyle S.M."/>
            <person name="Fraser C.M."/>
        </authorList>
    </citation>
    <scope>NUCLEOTIDE SEQUENCE [LARGE SCALE GENOMIC DNA]</scope>
    <source>
        <strain>1330</strain>
    </source>
</reference>
<reference key="2">
    <citation type="journal article" date="2011" name="J. Bacteriol.">
        <title>Revised genome sequence of Brucella suis 1330.</title>
        <authorList>
            <person name="Tae H."/>
            <person name="Shallom S."/>
            <person name="Settlage R."/>
            <person name="Preston D."/>
            <person name="Adams L.G."/>
            <person name="Garner H.R."/>
        </authorList>
    </citation>
    <scope>NUCLEOTIDE SEQUENCE [LARGE SCALE GENOMIC DNA]</scope>
    <source>
        <strain>1330</strain>
    </source>
</reference>
<name>RL13_BRUSU</name>
<gene>
    <name evidence="1" type="primary">rplM</name>
    <name type="ordered locus">BR0791</name>
    <name type="ordered locus">BS1330_I0787</name>
</gene>
<sequence>MATFSQKPAEVVKKWVLIDAEGLVVGRLASLVANRLRGKHKATFTPHVDDGDNVIIINADKVVLTGKKYTDKKYYWHTGHPGGIKERTARQILEGRFPERVLEKAIERMIPRGPLGRRQMKNLRVYAGPNHQHEAQQPEVLDVAALNRKNKGNA</sequence>
<feature type="chain" id="PRO_0000261698" description="Large ribosomal subunit protein uL13">
    <location>
        <begin position="1"/>
        <end position="154"/>
    </location>
</feature>
<evidence type="ECO:0000255" key="1">
    <source>
        <dbReference type="HAMAP-Rule" id="MF_01366"/>
    </source>
</evidence>
<evidence type="ECO:0000305" key="2"/>